<keyword id="KW-0002">3D-structure</keyword>
<keyword id="KW-0285">Flavoprotein</keyword>
<keyword id="KW-0288">FMN</keyword>
<keyword id="KW-0520">NAD</keyword>
<keyword id="KW-0521">NADP</keyword>
<keyword id="KW-0560">Oxidoreductase</keyword>
<keyword id="KW-1185">Reference proteome</keyword>
<reference key="1">
    <citation type="journal article" date="1997" name="Microbiology">
        <title>The Bacillus subtilis genome from gerBC (311 degrees) to licR (334 degrees).</title>
        <authorList>
            <person name="Presecan E."/>
            <person name="Moszer I."/>
            <person name="Boursier L."/>
            <person name="Cruz Ramos H."/>
            <person name="De La Fuente V."/>
            <person name="Hullo M.-F."/>
            <person name="Lelong C."/>
            <person name="Schleich S."/>
            <person name="Sekowska A."/>
            <person name="Song B.H."/>
            <person name="Villani G."/>
            <person name="Kunst F."/>
            <person name="Danchin A."/>
            <person name="Glaser P."/>
        </authorList>
    </citation>
    <scope>NUCLEOTIDE SEQUENCE [GENOMIC DNA]</scope>
    <source>
        <strain>168</strain>
    </source>
</reference>
<reference key="2">
    <citation type="journal article" date="1997" name="Nature">
        <title>The complete genome sequence of the Gram-positive bacterium Bacillus subtilis.</title>
        <authorList>
            <person name="Kunst F."/>
            <person name="Ogasawara N."/>
            <person name="Moszer I."/>
            <person name="Albertini A.M."/>
            <person name="Alloni G."/>
            <person name="Azevedo V."/>
            <person name="Bertero M.G."/>
            <person name="Bessieres P."/>
            <person name="Bolotin A."/>
            <person name="Borchert S."/>
            <person name="Borriss R."/>
            <person name="Boursier L."/>
            <person name="Brans A."/>
            <person name="Braun M."/>
            <person name="Brignell S.C."/>
            <person name="Bron S."/>
            <person name="Brouillet S."/>
            <person name="Bruschi C.V."/>
            <person name="Caldwell B."/>
            <person name="Capuano V."/>
            <person name="Carter N.M."/>
            <person name="Choi S.-K."/>
            <person name="Codani J.-J."/>
            <person name="Connerton I.F."/>
            <person name="Cummings N.J."/>
            <person name="Daniel R.A."/>
            <person name="Denizot F."/>
            <person name="Devine K.M."/>
            <person name="Duesterhoeft A."/>
            <person name="Ehrlich S.D."/>
            <person name="Emmerson P.T."/>
            <person name="Entian K.-D."/>
            <person name="Errington J."/>
            <person name="Fabret C."/>
            <person name="Ferrari E."/>
            <person name="Foulger D."/>
            <person name="Fritz C."/>
            <person name="Fujita M."/>
            <person name="Fujita Y."/>
            <person name="Fuma S."/>
            <person name="Galizzi A."/>
            <person name="Galleron N."/>
            <person name="Ghim S.-Y."/>
            <person name="Glaser P."/>
            <person name="Goffeau A."/>
            <person name="Golightly E.J."/>
            <person name="Grandi G."/>
            <person name="Guiseppi G."/>
            <person name="Guy B.J."/>
            <person name="Haga K."/>
            <person name="Haiech J."/>
            <person name="Harwood C.R."/>
            <person name="Henaut A."/>
            <person name="Hilbert H."/>
            <person name="Holsappel S."/>
            <person name="Hosono S."/>
            <person name="Hullo M.-F."/>
            <person name="Itaya M."/>
            <person name="Jones L.-M."/>
            <person name="Joris B."/>
            <person name="Karamata D."/>
            <person name="Kasahara Y."/>
            <person name="Klaerr-Blanchard M."/>
            <person name="Klein C."/>
            <person name="Kobayashi Y."/>
            <person name="Koetter P."/>
            <person name="Koningstein G."/>
            <person name="Krogh S."/>
            <person name="Kumano M."/>
            <person name="Kurita K."/>
            <person name="Lapidus A."/>
            <person name="Lardinois S."/>
            <person name="Lauber J."/>
            <person name="Lazarevic V."/>
            <person name="Lee S.-M."/>
            <person name="Levine A."/>
            <person name="Liu H."/>
            <person name="Masuda S."/>
            <person name="Mauel C."/>
            <person name="Medigue C."/>
            <person name="Medina N."/>
            <person name="Mellado R.P."/>
            <person name="Mizuno M."/>
            <person name="Moestl D."/>
            <person name="Nakai S."/>
            <person name="Noback M."/>
            <person name="Noone D."/>
            <person name="O'Reilly M."/>
            <person name="Ogawa K."/>
            <person name="Ogiwara A."/>
            <person name="Oudega B."/>
            <person name="Park S.-H."/>
            <person name="Parro V."/>
            <person name="Pohl T.M."/>
            <person name="Portetelle D."/>
            <person name="Porwollik S."/>
            <person name="Prescott A.M."/>
            <person name="Presecan E."/>
            <person name="Pujic P."/>
            <person name="Purnelle B."/>
            <person name="Rapoport G."/>
            <person name="Rey M."/>
            <person name="Reynolds S."/>
            <person name="Rieger M."/>
            <person name="Rivolta C."/>
            <person name="Rocha E."/>
            <person name="Roche B."/>
            <person name="Rose M."/>
            <person name="Sadaie Y."/>
            <person name="Sato T."/>
            <person name="Scanlan E."/>
            <person name="Schleich S."/>
            <person name="Schroeter R."/>
            <person name="Scoffone F."/>
            <person name="Sekiguchi J."/>
            <person name="Sekowska A."/>
            <person name="Seror S.J."/>
            <person name="Serror P."/>
            <person name="Shin B.-S."/>
            <person name="Soldo B."/>
            <person name="Sorokin A."/>
            <person name="Tacconi E."/>
            <person name="Takagi T."/>
            <person name="Takahashi H."/>
            <person name="Takemaru K."/>
            <person name="Takeuchi M."/>
            <person name="Tamakoshi A."/>
            <person name="Tanaka T."/>
            <person name="Terpstra P."/>
            <person name="Tognoni A."/>
            <person name="Tosato V."/>
            <person name="Uchiyama S."/>
            <person name="Vandenbol M."/>
            <person name="Vannier F."/>
            <person name="Vassarotti A."/>
            <person name="Viari A."/>
            <person name="Wambutt R."/>
            <person name="Wedler E."/>
            <person name="Wedler H."/>
            <person name="Weitzenegger T."/>
            <person name="Winters P."/>
            <person name="Wipat A."/>
            <person name="Yamamoto H."/>
            <person name="Yamane K."/>
            <person name="Yasumoto K."/>
            <person name="Yata K."/>
            <person name="Yoshida K."/>
            <person name="Yoshikawa H.-F."/>
            <person name="Zumstein E."/>
            <person name="Yoshikawa H."/>
            <person name="Danchin A."/>
        </authorList>
    </citation>
    <scope>NUCLEOTIDE SEQUENCE [LARGE SCALE GENOMIC DNA]</scope>
    <source>
        <strain>168</strain>
    </source>
</reference>
<reference key="3">
    <citation type="submission" date="2005-01" db="PDB data bank">
        <title>Crystal structure analysis of trp repressor binding protein from Bacillus subtilis.</title>
        <authorList>
            <consortium name="Midwest center for structural genomics (MCSG)"/>
        </authorList>
    </citation>
    <scope>X-RAY CRYSTALLOGRAPHY (1.8 ANGSTROMS)</scope>
</reference>
<sequence>MKIAVINGGTRSGGNTDVLAEKAVQGFDAEHIYLQKYPIQPIEDLRHAQGGFRPVQDDYDSIIERILQCHILIFATPIYWFGMSGTLKLFIDRWSQTLRDPRFPDFKQQMSVKQAYVIAVGGDNPKIKGLPLIQQFEHIFHFMGMSFKGYVLGEGNRPGDILRDHQALSAASRLLKRSDAI</sequence>
<dbReference type="EC" id="1.-.-.-"/>
<dbReference type="EMBL" id="Z92952">
    <property type="protein sequence ID" value="CAB07451.1"/>
    <property type="molecule type" value="Genomic_DNA"/>
</dbReference>
<dbReference type="EMBL" id="Z93767">
    <property type="protein sequence ID" value="CAB07794.1"/>
    <property type="molecule type" value="Genomic_DNA"/>
</dbReference>
<dbReference type="EMBL" id="AL009126">
    <property type="protein sequence ID" value="CAB15632.1"/>
    <property type="molecule type" value="Genomic_DNA"/>
</dbReference>
<dbReference type="PIR" id="A70068">
    <property type="entry name" value="A70068"/>
</dbReference>
<dbReference type="RefSeq" id="NP_391496.1">
    <property type="nucleotide sequence ID" value="NC_000964.3"/>
</dbReference>
<dbReference type="RefSeq" id="WP_003242945.1">
    <property type="nucleotide sequence ID" value="NZ_OZ025638.1"/>
</dbReference>
<dbReference type="PDB" id="1RLI">
    <property type="method" value="X-ray"/>
    <property type="resolution" value="1.80 A"/>
    <property type="chains" value="A/B/C/D=1-181"/>
</dbReference>
<dbReference type="PDBsum" id="1RLI"/>
<dbReference type="SMR" id="P96726"/>
<dbReference type="FunCoup" id="P96726">
    <property type="interactions" value="30"/>
</dbReference>
<dbReference type="STRING" id="224308.BSU36150"/>
<dbReference type="PaxDb" id="224308-BSU36150"/>
<dbReference type="EnsemblBacteria" id="CAB15632">
    <property type="protein sequence ID" value="CAB15632"/>
    <property type="gene ID" value="BSU_36150"/>
</dbReference>
<dbReference type="GeneID" id="936882"/>
<dbReference type="KEGG" id="bsu:BSU36150"/>
<dbReference type="PATRIC" id="fig|224308.179.peg.3912"/>
<dbReference type="eggNOG" id="COG0655">
    <property type="taxonomic scope" value="Bacteria"/>
</dbReference>
<dbReference type="InParanoid" id="P96726"/>
<dbReference type="OrthoDB" id="9805976at2"/>
<dbReference type="PhylomeDB" id="P96726"/>
<dbReference type="BioCyc" id="BSUB:BSU36150-MONOMER"/>
<dbReference type="EvolutionaryTrace" id="P96726"/>
<dbReference type="Proteomes" id="UP000001570">
    <property type="component" value="Chromosome"/>
</dbReference>
<dbReference type="GO" id="GO:0016491">
    <property type="term" value="F:oxidoreductase activity"/>
    <property type="evidence" value="ECO:0007669"/>
    <property type="project" value="UniProtKB-KW"/>
</dbReference>
<dbReference type="Gene3D" id="3.40.50.360">
    <property type="match status" value="1"/>
</dbReference>
<dbReference type="InterPro" id="IPR029039">
    <property type="entry name" value="Flavoprotein-like_sf"/>
</dbReference>
<dbReference type="InterPro" id="IPR005025">
    <property type="entry name" value="FMN_Rdtase-like_dom"/>
</dbReference>
<dbReference type="InterPro" id="IPR051796">
    <property type="entry name" value="ISF_SsuE-like"/>
</dbReference>
<dbReference type="PANTHER" id="PTHR43278">
    <property type="entry name" value="NAD(P)H-DEPENDENT FMN-CONTAINING OXIDOREDUCTASE YWQN-RELATED"/>
    <property type="match status" value="1"/>
</dbReference>
<dbReference type="PANTHER" id="PTHR43278:SF4">
    <property type="entry name" value="NAD(P)H-DEPENDENT FMN-CONTAINING OXIDOREDUCTASE YWQN-RELATED"/>
    <property type="match status" value="1"/>
</dbReference>
<dbReference type="Pfam" id="PF03358">
    <property type="entry name" value="FMN_red"/>
    <property type="match status" value="1"/>
</dbReference>
<dbReference type="SUPFAM" id="SSF52218">
    <property type="entry name" value="Flavoproteins"/>
    <property type="match status" value="1"/>
</dbReference>
<gene>
    <name type="primary">ywqN</name>
    <name type="ordered locus">BSU36150</name>
</gene>
<feature type="chain" id="PRO_0000360520" description="Putative NAD(P)H-dependent FMN-containing oxidoreductase YwqN">
    <location>
        <begin position="1"/>
        <end position="181"/>
    </location>
</feature>
<feature type="strand" evidence="2">
    <location>
        <begin position="3"/>
        <end position="9"/>
    </location>
</feature>
<feature type="helix" evidence="2">
    <location>
        <begin position="15"/>
        <end position="24"/>
    </location>
</feature>
<feature type="turn" evidence="2">
    <location>
        <begin position="25"/>
        <end position="27"/>
    </location>
</feature>
<feature type="strand" evidence="2">
    <location>
        <begin position="30"/>
        <end position="33"/>
    </location>
</feature>
<feature type="helix" evidence="2">
    <location>
        <begin position="59"/>
        <end position="67"/>
    </location>
</feature>
<feature type="strand" evidence="2">
    <location>
        <begin position="70"/>
        <end position="77"/>
    </location>
</feature>
<feature type="helix" evidence="2">
    <location>
        <begin position="85"/>
        <end position="92"/>
    </location>
</feature>
<feature type="helix" evidence="2">
    <location>
        <begin position="94"/>
        <end position="97"/>
    </location>
</feature>
<feature type="helix" evidence="2">
    <location>
        <begin position="106"/>
        <end position="111"/>
    </location>
</feature>
<feature type="strand" evidence="2">
    <location>
        <begin position="113"/>
        <end position="123"/>
    </location>
</feature>
<feature type="helix" evidence="2">
    <location>
        <begin position="125"/>
        <end position="128"/>
    </location>
</feature>
<feature type="helix" evidence="2">
    <location>
        <begin position="130"/>
        <end position="143"/>
    </location>
</feature>
<feature type="strand" evidence="2">
    <location>
        <begin position="146"/>
        <end position="154"/>
    </location>
</feature>
<feature type="helix" evidence="2">
    <location>
        <begin position="160"/>
        <end position="163"/>
    </location>
</feature>
<feature type="helix" evidence="2">
    <location>
        <begin position="165"/>
        <end position="173"/>
    </location>
</feature>
<evidence type="ECO:0000305" key="1"/>
<evidence type="ECO:0007829" key="2">
    <source>
        <dbReference type="PDB" id="1RLI"/>
    </source>
</evidence>
<comment type="function">
    <text evidence="1">Putative NADPH-dependent oxidoreductase.</text>
</comment>
<comment type="cofactor">
    <cofactor evidence="1">
        <name>FMN</name>
        <dbReference type="ChEBI" id="CHEBI:58210"/>
    </cofactor>
</comment>
<comment type="similarity">
    <text evidence="1">Belongs to the SsuE family.</text>
</comment>
<protein>
    <recommendedName>
        <fullName>Putative NAD(P)H-dependent FMN-containing oxidoreductase YwqN</fullName>
        <ecNumber>1.-.-.-</ecNumber>
    </recommendedName>
</protein>
<name>YWQN_BACSU</name>
<proteinExistence type="evidence at protein level"/>
<accession>P96726</accession>
<accession>Q795C0</accession>
<accession>Q798I9</accession>
<organism>
    <name type="scientific">Bacillus subtilis (strain 168)</name>
    <dbReference type="NCBI Taxonomy" id="224308"/>
    <lineage>
        <taxon>Bacteria</taxon>
        <taxon>Bacillati</taxon>
        <taxon>Bacillota</taxon>
        <taxon>Bacilli</taxon>
        <taxon>Bacillales</taxon>
        <taxon>Bacillaceae</taxon>
        <taxon>Bacillus</taxon>
    </lineage>
</organism>